<accession>Q8XBK4</accession>
<accession>Q7AAQ0</accession>
<keyword id="KW-0050">Antiport</keyword>
<keyword id="KW-0997">Cell inner membrane</keyword>
<keyword id="KW-1003">Cell membrane</keyword>
<keyword id="KW-0472">Membrane</keyword>
<keyword id="KW-1185">Reference proteome</keyword>
<keyword id="KW-0812">Transmembrane</keyword>
<keyword id="KW-1133">Transmembrane helix</keyword>
<keyword id="KW-0813">Transport</keyword>
<organism>
    <name type="scientific">Escherichia coli O157:H7</name>
    <dbReference type="NCBI Taxonomy" id="83334"/>
    <lineage>
        <taxon>Bacteria</taxon>
        <taxon>Pseudomonadati</taxon>
        <taxon>Pseudomonadota</taxon>
        <taxon>Gammaproteobacteria</taxon>
        <taxon>Enterobacterales</taxon>
        <taxon>Enterobacteriaceae</taxon>
        <taxon>Escherichia</taxon>
    </lineage>
</organism>
<feature type="chain" id="PRO_0000262711" description="L-tartrate/succinate antiporter">
    <location>
        <begin position="1"/>
        <end position="487"/>
    </location>
</feature>
<feature type="transmembrane region" description="Helical" evidence="2">
    <location>
        <begin position="10"/>
        <end position="30"/>
    </location>
</feature>
<feature type="transmembrane region" description="Helical" evidence="2">
    <location>
        <begin position="33"/>
        <end position="53"/>
    </location>
</feature>
<feature type="transmembrane region" description="Helical" evidence="2">
    <location>
        <begin position="54"/>
        <end position="74"/>
    </location>
</feature>
<feature type="transmembrane region" description="Helical" evidence="2">
    <location>
        <begin position="93"/>
        <end position="113"/>
    </location>
</feature>
<feature type="transmembrane region" description="Helical" evidence="2">
    <location>
        <begin position="137"/>
        <end position="157"/>
    </location>
</feature>
<feature type="transmembrane region" description="Helical" evidence="2">
    <location>
        <begin position="189"/>
        <end position="209"/>
    </location>
</feature>
<feature type="transmembrane region" description="Helical" evidence="2">
    <location>
        <begin position="236"/>
        <end position="256"/>
    </location>
</feature>
<feature type="transmembrane region" description="Helical" evidence="2">
    <location>
        <begin position="292"/>
        <end position="312"/>
    </location>
</feature>
<feature type="transmembrane region" description="Helical" evidence="2">
    <location>
        <begin position="313"/>
        <end position="333"/>
    </location>
</feature>
<feature type="transmembrane region" description="Helical" evidence="2">
    <location>
        <begin position="340"/>
        <end position="360"/>
    </location>
</feature>
<feature type="transmembrane region" description="Helical" evidence="2">
    <location>
        <begin position="370"/>
        <end position="390"/>
    </location>
</feature>
<feature type="transmembrane region" description="Helical" evidence="2">
    <location>
        <begin position="393"/>
        <end position="413"/>
    </location>
</feature>
<feature type="transmembrane region" description="Helical" evidence="2">
    <location>
        <begin position="418"/>
        <end position="438"/>
    </location>
</feature>
<feature type="transmembrane region" description="Helical" evidence="2">
    <location>
        <begin position="465"/>
        <end position="485"/>
    </location>
</feature>
<comment type="function">
    <text evidence="1">Catalyzes the uptake of tartrate in exchange for intracellular succinate. Essential for anaerobic L-tartrate fermentation.</text>
</comment>
<comment type="catalytic activity">
    <reaction evidence="1">
        <text>(2R,3R)-tartrate(out) + succinate(in) = (2R,3R)-tartrate(in) + succinate(out)</text>
        <dbReference type="Rhea" id="RHEA:29259"/>
        <dbReference type="ChEBI" id="CHEBI:30031"/>
        <dbReference type="ChEBI" id="CHEBI:30924"/>
    </reaction>
    <physiologicalReaction direction="left-to-right" evidence="1">
        <dbReference type="Rhea" id="RHEA:29260"/>
    </physiologicalReaction>
</comment>
<comment type="subcellular location">
    <subcellularLocation>
        <location evidence="1">Cell inner membrane</location>
        <topology evidence="2">Multi-pass membrane protein</topology>
    </subcellularLocation>
</comment>
<comment type="similarity">
    <text evidence="3">Belongs to the SLC13A/DASS transporter (TC 2.A.47) family. DIT1 subfamily.</text>
</comment>
<evidence type="ECO:0000250" key="1">
    <source>
        <dbReference type="UniProtKB" id="P39414"/>
    </source>
</evidence>
<evidence type="ECO:0000255" key="2"/>
<evidence type="ECO:0000305" key="3"/>
<protein>
    <recommendedName>
        <fullName evidence="1">L-tartrate/succinate antiporter</fullName>
    </recommendedName>
    <alternativeName>
        <fullName>Tartrate carrier</fullName>
    </alternativeName>
    <alternativeName>
        <fullName>Tartrate transporter</fullName>
    </alternativeName>
</protein>
<gene>
    <name type="primary">ttdT</name>
    <name type="ordered locus">Z4416</name>
    <name type="ordered locus">ECs3946</name>
</gene>
<sequence length="487" mass="52879">MKPSTEWWRYLAPLAVIAIIALIPVPAGLESHTWLYFAVFTGVIVGLILEPVPGAVVAMVGISIIAILSPWLLFSPEQLAQPGFKFTAKSLSWAVSGFSNSVIWLIFAAFMFGTGYEKTGLGRRIALILVKKMGHRTLFLGYAVMFSELILAPVTPSNSARGAGIIYPIIRNLPPLYQSQPNDSSSRSIGSYIMWMGIVADCVTSAIFLTAMAPNLLLIGLMKSASHATLSWGDWFLGMLPLSILLVLLVPWLAYVLYPPVLKSGDQVPRWAETELQAMGPLCSREKRMLGLMVGALVLWIFGGDYIDAAMVGYSVVALMLLLRIISWDDIVSNKAAWNVFFWLASLITLATGLNNTGFISWFGKLLAGSLSGYSPTMVMVALIVVFYLLRYFFASATAYTSALAPMMIAAALAMPEIPLPVFCLMVGAAIGLGSILTPYATGPSPIYYGSGYLPTADYWRLGAIFGLIFLVLLVITGLLWMPVVLL</sequence>
<name>TTDT_ECO57</name>
<dbReference type="EMBL" id="AE005174">
    <property type="protein sequence ID" value="AAG58197.1"/>
    <property type="molecule type" value="Genomic_DNA"/>
</dbReference>
<dbReference type="EMBL" id="BA000007">
    <property type="protein sequence ID" value="BAB37369.1"/>
    <property type="molecule type" value="Genomic_DNA"/>
</dbReference>
<dbReference type="PIR" id="A85967">
    <property type="entry name" value="A85967"/>
</dbReference>
<dbReference type="PIR" id="B91122">
    <property type="entry name" value="B91122"/>
</dbReference>
<dbReference type="RefSeq" id="NP_311973.1">
    <property type="nucleotide sequence ID" value="NC_002695.1"/>
</dbReference>
<dbReference type="RefSeq" id="WP_000804928.1">
    <property type="nucleotide sequence ID" value="NZ_VOAI01000009.1"/>
</dbReference>
<dbReference type="SMR" id="Q8XBK4"/>
<dbReference type="STRING" id="155864.Z4416"/>
<dbReference type="GeneID" id="916226"/>
<dbReference type="KEGG" id="ece:Z4416"/>
<dbReference type="KEGG" id="ecs:ECs_3946"/>
<dbReference type="PATRIC" id="fig|386585.9.peg.4116"/>
<dbReference type="eggNOG" id="COG0471">
    <property type="taxonomic scope" value="Bacteria"/>
</dbReference>
<dbReference type="HOGENOM" id="CLU_005170_7_0_6"/>
<dbReference type="OMA" id="YAWHFFA"/>
<dbReference type="Proteomes" id="UP000000558">
    <property type="component" value="Chromosome"/>
</dbReference>
<dbReference type="Proteomes" id="UP000002519">
    <property type="component" value="Chromosome"/>
</dbReference>
<dbReference type="GO" id="GO:0005886">
    <property type="term" value="C:plasma membrane"/>
    <property type="evidence" value="ECO:0007669"/>
    <property type="project" value="UniProtKB-SubCell"/>
</dbReference>
<dbReference type="GO" id="GO:0015297">
    <property type="term" value="F:antiporter activity"/>
    <property type="evidence" value="ECO:0007669"/>
    <property type="project" value="UniProtKB-KW"/>
</dbReference>
<dbReference type="InterPro" id="IPR030676">
    <property type="entry name" value="CitT-rel"/>
</dbReference>
<dbReference type="InterPro" id="IPR001898">
    <property type="entry name" value="SLC13A/DASS"/>
</dbReference>
<dbReference type="NCBIfam" id="TIGR00785">
    <property type="entry name" value="dass"/>
    <property type="match status" value="1"/>
</dbReference>
<dbReference type="PANTHER" id="PTHR42826">
    <property type="entry name" value="DICARBOXYLATE TRANSPORTER 2.1, CHLOROPLASTIC"/>
    <property type="match status" value="1"/>
</dbReference>
<dbReference type="Pfam" id="PF00939">
    <property type="entry name" value="Na_sulph_symp"/>
    <property type="match status" value="1"/>
</dbReference>
<dbReference type="PIRSF" id="PIRSF002457">
    <property type="entry name" value="DASS"/>
    <property type="match status" value="1"/>
</dbReference>
<reference key="1">
    <citation type="journal article" date="2001" name="Nature">
        <title>Genome sequence of enterohaemorrhagic Escherichia coli O157:H7.</title>
        <authorList>
            <person name="Perna N.T."/>
            <person name="Plunkett G. III"/>
            <person name="Burland V."/>
            <person name="Mau B."/>
            <person name="Glasner J.D."/>
            <person name="Rose D.J."/>
            <person name="Mayhew G.F."/>
            <person name="Evans P.S."/>
            <person name="Gregor J."/>
            <person name="Kirkpatrick H.A."/>
            <person name="Posfai G."/>
            <person name="Hackett J."/>
            <person name="Klink S."/>
            <person name="Boutin A."/>
            <person name="Shao Y."/>
            <person name="Miller L."/>
            <person name="Grotbeck E.J."/>
            <person name="Davis N.W."/>
            <person name="Lim A."/>
            <person name="Dimalanta E.T."/>
            <person name="Potamousis K."/>
            <person name="Apodaca J."/>
            <person name="Anantharaman T.S."/>
            <person name="Lin J."/>
            <person name="Yen G."/>
            <person name="Schwartz D.C."/>
            <person name="Welch R.A."/>
            <person name="Blattner F.R."/>
        </authorList>
    </citation>
    <scope>NUCLEOTIDE SEQUENCE [LARGE SCALE GENOMIC DNA]</scope>
    <source>
        <strain>O157:H7 / EDL933 / ATCC 700927 / EHEC</strain>
    </source>
</reference>
<reference key="2">
    <citation type="journal article" date="2001" name="DNA Res.">
        <title>Complete genome sequence of enterohemorrhagic Escherichia coli O157:H7 and genomic comparison with a laboratory strain K-12.</title>
        <authorList>
            <person name="Hayashi T."/>
            <person name="Makino K."/>
            <person name="Ohnishi M."/>
            <person name="Kurokawa K."/>
            <person name="Ishii K."/>
            <person name="Yokoyama K."/>
            <person name="Han C.-G."/>
            <person name="Ohtsubo E."/>
            <person name="Nakayama K."/>
            <person name="Murata T."/>
            <person name="Tanaka M."/>
            <person name="Tobe T."/>
            <person name="Iida T."/>
            <person name="Takami H."/>
            <person name="Honda T."/>
            <person name="Sasakawa C."/>
            <person name="Ogasawara N."/>
            <person name="Yasunaga T."/>
            <person name="Kuhara S."/>
            <person name="Shiba T."/>
            <person name="Hattori M."/>
            <person name="Shinagawa H."/>
        </authorList>
    </citation>
    <scope>NUCLEOTIDE SEQUENCE [LARGE SCALE GENOMIC DNA]</scope>
    <source>
        <strain>O157:H7 / Sakai / RIMD 0509952 / EHEC</strain>
    </source>
</reference>
<proteinExistence type="inferred from homology"/>